<comment type="catalytic activity">
    <reaction evidence="1">
        <text>L-histidinol phosphate + 2-oxoglutarate = 3-(imidazol-4-yl)-2-oxopropyl phosphate + L-glutamate</text>
        <dbReference type="Rhea" id="RHEA:23744"/>
        <dbReference type="ChEBI" id="CHEBI:16810"/>
        <dbReference type="ChEBI" id="CHEBI:29985"/>
        <dbReference type="ChEBI" id="CHEBI:57766"/>
        <dbReference type="ChEBI" id="CHEBI:57980"/>
        <dbReference type="EC" id="2.6.1.9"/>
    </reaction>
</comment>
<comment type="cofactor">
    <cofactor evidence="1">
        <name>pyridoxal 5'-phosphate</name>
        <dbReference type="ChEBI" id="CHEBI:597326"/>
    </cofactor>
</comment>
<comment type="pathway">
    <text evidence="1">Amino-acid biosynthesis; L-histidine biosynthesis; L-histidine from 5-phospho-alpha-D-ribose 1-diphosphate: step 7/9.</text>
</comment>
<comment type="subunit">
    <text evidence="1">Homodimer.</text>
</comment>
<comment type="similarity">
    <text evidence="1">Belongs to the class-II pyridoxal-phosphate-dependent aminotransferase family. Histidinol-phosphate aminotransferase subfamily.</text>
</comment>
<accession>Q2IS68</accession>
<protein>
    <recommendedName>
        <fullName evidence="1">Histidinol-phosphate aminotransferase</fullName>
        <ecNumber evidence="1">2.6.1.9</ecNumber>
    </recommendedName>
    <alternativeName>
        <fullName evidence="1">Imidazole acetol-phosphate transaminase</fullName>
    </alternativeName>
</protein>
<evidence type="ECO:0000255" key="1">
    <source>
        <dbReference type="HAMAP-Rule" id="MF_01023"/>
    </source>
</evidence>
<gene>
    <name evidence="1" type="primary">hisC</name>
    <name type="ordered locus">RPB_4254</name>
</gene>
<name>HIS8_RHOP2</name>
<proteinExistence type="inferred from homology"/>
<reference key="1">
    <citation type="submission" date="2006-01" db="EMBL/GenBank/DDBJ databases">
        <title>Complete sequence of Rhodopseudomonas palustris HaA2.</title>
        <authorList>
            <consortium name="US DOE Joint Genome Institute"/>
            <person name="Copeland A."/>
            <person name="Lucas S."/>
            <person name="Lapidus A."/>
            <person name="Barry K."/>
            <person name="Detter J.C."/>
            <person name="Glavina T."/>
            <person name="Hammon N."/>
            <person name="Israni S."/>
            <person name="Pitluck S."/>
            <person name="Chain P."/>
            <person name="Malfatti S."/>
            <person name="Shin M."/>
            <person name="Vergez L."/>
            <person name="Schmutz J."/>
            <person name="Larimer F."/>
            <person name="Land M."/>
            <person name="Hauser L."/>
            <person name="Pelletier D.A."/>
            <person name="Kyrpides N."/>
            <person name="Anderson I."/>
            <person name="Oda Y."/>
            <person name="Harwood C.S."/>
            <person name="Richardson P."/>
        </authorList>
    </citation>
    <scope>NUCLEOTIDE SEQUENCE [LARGE SCALE GENOMIC DNA]</scope>
    <source>
        <strain>HaA2</strain>
    </source>
</reference>
<organism>
    <name type="scientific">Rhodopseudomonas palustris (strain HaA2)</name>
    <dbReference type="NCBI Taxonomy" id="316058"/>
    <lineage>
        <taxon>Bacteria</taxon>
        <taxon>Pseudomonadati</taxon>
        <taxon>Pseudomonadota</taxon>
        <taxon>Alphaproteobacteria</taxon>
        <taxon>Hyphomicrobiales</taxon>
        <taxon>Nitrobacteraceae</taxon>
        <taxon>Rhodopseudomonas</taxon>
    </lineage>
</organism>
<sequence>MSRPVPKPGILDIAPYTPGKSPVPEAGRKVFKLSANETPFGPSPHAIAAYKSAADHLEDYPEGTSRVLREAIGRAYGLDPDRIICGAGSDEILNLLAHTYLGPGDEAISSQHGFLVYPIATLANGATNVVAPEKDLTTDVDAILSKVTPNTKLVWLANPNNPTGTYIPFDEVKRLRAGLPSHVVLVLDAAYADYVSKNDYEIGIELVSTTDNTVLTHTFSKVHGLASLRIGWMFGPANIVDAVNRIRGPFNTSIPAQLAAVAAIQDTAHVDMSRVHTEKWRDRLTEEFTKLGLTVTPSVCNFVLMHFPTTAGKTAADADAFLTKRGLVLRALGNYKLPHALRMTIGTDEANELVIAALTEFMAKP</sequence>
<keyword id="KW-0028">Amino-acid biosynthesis</keyword>
<keyword id="KW-0032">Aminotransferase</keyword>
<keyword id="KW-0368">Histidine biosynthesis</keyword>
<keyword id="KW-0663">Pyridoxal phosphate</keyword>
<keyword id="KW-1185">Reference proteome</keyword>
<keyword id="KW-0808">Transferase</keyword>
<feature type="chain" id="PRO_1000063492" description="Histidinol-phosphate aminotransferase">
    <location>
        <begin position="1"/>
        <end position="365"/>
    </location>
</feature>
<feature type="modified residue" description="N6-(pyridoxal phosphate)lysine" evidence="1">
    <location>
        <position position="221"/>
    </location>
</feature>
<dbReference type="EC" id="2.6.1.9" evidence="1"/>
<dbReference type="EMBL" id="CP000250">
    <property type="protein sequence ID" value="ABD08942.1"/>
    <property type="molecule type" value="Genomic_DNA"/>
</dbReference>
<dbReference type="RefSeq" id="WP_011443126.1">
    <property type="nucleotide sequence ID" value="NC_007778.1"/>
</dbReference>
<dbReference type="SMR" id="Q2IS68"/>
<dbReference type="STRING" id="316058.RPB_4254"/>
<dbReference type="KEGG" id="rpb:RPB_4254"/>
<dbReference type="eggNOG" id="COG0079">
    <property type="taxonomic scope" value="Bacteria"/>
</dbReference>
<dbReference type="HOGENOM" id="CLU_017584_3_3_5"/>
<dbReference type="OrthoDB" id="9809616at2"/>
<dbReference type="UniPathway" id="UPA00031">
    <property type="reaction ID" value="UER00012"/>
</dbReference>
<dbReference type="Proteomes" id="UP000008809">
    <property type="component" value="Chromosome"/>
</dbReference>
<dbReference type="GO" id="GO:0004400">
    <property type="term" value="F:histidinol-phosphate transaminase activity"/>
    <property type="evidence" value="ECO:0007669"/>
    <property type="project" value="UniProtKB-UniRule"/>
</dbReference>
<dbReference type="GO" id="GO:0030170">
    <property type="term" value="F:pyridoxal phosphate binding"/>
    <property type="evidence" value="ECO:0007669"/>
    <property type="project" value="InterPro"/>
</dbReference>
<dbReference type="GO" id="GO:0000105">
    <property type="term" value="P:L-histidine biosynthetic process"/>
    <property type="evidence" value="ECO:0007669"/>
    <property type="project" value="UniProtKB-UniRule"/>
</dbReference>
<dbReference type="CDD" id="cd00609">
    <property type="entry name" value="AAT_like"/>
    <property type="match status" value="1"/>
</dbReference>
<dbReference type="Gene3D" id="3.90.1150.10">
    <property type="entry name" value="Aspartate Aminotransferase, domain 1"/>
    <property type="match status" value="1"/>
</dbReference>
<dbReference type="Gene3D" id="3.40.640.10">
    <property type="entry name" value="Type I PLP-dependent aspartate aminotransferase-like (Major domain)"/>
    <property type="match status" value="1"/>
</dbReference>
<dbReference type="HAMAP" id="MF_01023">
    <property type="entry name" value="HisC_aminotrans_2"/>
    <property type="match status" value="1"/>
</dbReference>
<dbReference type="InterPro" id="IPR004839">
    <property type="entry name" value="Aminotransferase_I/II_large"/>
</dbReference>
<dbReference type="InterPro" id="IPR005861">
    <property type="entry name" value="HisP_aminotrans"/>
</dbReference>
<dbReference type="InterPro" id="IPR050106">
    <property type="entry name" value="HistidinolP_aminotransfase"/>
</dbReference>
<dbReference type="InterPro" id="IPR015424">
    <property type="entry name" value="PyrdxlP-dep_Trfase"/>
</dbReference>
<dbReference type="InterPro" id="IPR015421">
    <property type="entry name" value="PyrdxlP-dep_Trfase_major"/>
</dbReference>
<dbReference type="InterPro" id="IPR015422">
    <property type="entry name" value="PyrdxlP-dep_Trfase_small"/>
</dbReference>
<dbReference type="PANTHER" id="PTHR43643:SF3">
    <property type="entry name" value="HISTIDINOL-PHOSPHATE AMINOTRANSFERASE"/>
    <property type="match status" value="1"/>
</dbReference>
<dbReference type="PANTHER" id="PTHR43643">
    <property type="entry name" value="HISTIDINOL-PHOSPHATE AMINOTRANSFERASE 2"/>
    <property type="match status" value="1"/>
</dbReference>
<dbReference type="Pfam" id="PF00155">
    <property type="entry name" value="Aminotran_1_2"/>
    <property type="match status" value="1"/>
</dbReference>
<dbReference type="SUPFAM" id="SSF53383">
    <property type="entry name" value="PLP-dependent transferases"/>
    <property type="match status" value="1"/>
</dbReference>